<evidence type="ECO:0000250" key="1">
    <source>
        <dbReference type="UniProtKB" id="O02351"/>
    </source>
</evidence>
<evidence type="ECO:0000250" key="2">
    <source>
        <dbReference type="UniProtKB" id="P26201"/>
    </source>
</evidence>
<evidence type="ECO:0000250" key="3">
    <source>
        <dbReference type="UniProtKB" id="Q9VDD3"/>
    </source>
</evidence>
<evidence type="ECO:0000255" key="4"/>
<evidence type="ECO:0000256" key="5">
    <source>
        <dbReference type="SAM" id="MobiDB-lite"/>
    </source>
</evidence>
<evidence type="ECO:0000305" key="6"/>
<evidence type="ECO:0000312" key="7">
    <source>
        <dbReference type="EMBL" id="EDV93606.1"/>
    </source>
</evidence>
<dbReference type="EMBL" id="CH916369">
    <property type="protein sequence ID" value="EDV93606.1"/>
    <property type="molecule type" value="Genomic_DNA"/>
</dbReference>
<dbReference type="SMR" id="B4JG39"/>
<dbReference type="FunCoup" id="B4JG39">
    <property type="interactions" value="1"/>
</dbReference>
<dbReference type="STRING" id="7222.B4JG39"/>
<dbReference type="GlyCosmos" id="B4JG39">
    <property type="glycosylation" value="4 sites, No reported glycans"/>
</dbReference>
<dbReference type="EnsemblMetazoa" id="FBtr0154823">
    <property type="protein sequence ID" value="FBpp0153315"/>
    <property type="gene ID" value="FBgn0126874"/>
</dbReference>
<dbReference type="EnsemblMetazoa" id="XM_001990508.2">
    <property type="protein sequence ID" value="XP_001990544.1"/>
    <property type="gene ID" value="LOC6564449"/>
</dbReference>
<dbReference type="GeneID" id="6564449"/>
<dbReference type="KEGG" id="dgr:6564449"/>
<dbReference type="CTD" id="42514"/>
<dbReference type="eggNOG" id="KOG3776">
    <property type="taxonomic scope" value="Eukaryota"/>
</dbReference>
<dbReference type="HOGENOM" id="CLU_019853_1_2_1"/>
<dbReference type="InParanoid" id="B4JG39"/>
<dbReference type="OMA" id="QRKSSYH"/>
<dbReference type="OrthoDB" id="449052at2759"/>
<dbReference type="PhylomeDB" id="B4JG39"/>
<dbReference type="ChiTaRS" id="Snmp1">
    <property type="organism name" value="fly"/>
</dbReference>
<dbReference type="Proteomes" id="UP000001070">
    <property type="component" value="Unassembled WGS sequence"/>
</dbReference>
<dbReference type="GO" id="GO:0005737">
    <property type="term" value="C:cytoplasm"/>
    <property type="evidence" value="ECO:0007669"/>
    <property type="project" value="TreeGrafter"/>
</dbReference>
<dbReference type="GO" id="GO:0005886">
    <property type="term" value="C:plasma membrane"/>
    <property type="evidence" value="ECO:0007669"/>
    <property type="project" value="UniProtKB-SubCell"/>
</dbReference>
<dbReference type="GO" id="GO:0005044">
    <property type="term" value="F:scavenger receptor activity"/>
    <property type="evidence" value="ECO:0007669"/>
    <property type="project" value="TreeGrafter"/>
</dbReference>
<dbReference type="GO" id="GO:0007608">
    <property type="term" value="P:sensory perception of smell"/>
    <property type="evidence" value="ECO:0007669"/>
    <property type="project" value="UniProtKB-KW"/>
</dbReference>
<dbReference type="InterPro" id="IPR002159">
    <property type="entry name" value="CD36_fam"/>
</dbReference>
<dbReference type="PANTHER" id="PTHR11923">
    <property type="entry name" value="SCAVENGER RECEPTOR CLASS B TYPE-1 SR-B1"/>
    <property type="match status" value="1"/>
</dbReference>
<dbReference type="PANTHER" id="PTHR11923:SF69">
    <property type="entry name" value="SENSORY NEURON MEMBRANE PROTEIN 1"/>
    <property type="match status" value="1"/>
</dbReference>
<dbReference type="Pfam" id="PF01130">
    <property type="entry name" value="CD36"/>
    <property type="match status" value="1"/>
</dbReference>
<dbReference type="PRINTS" id="PR01609">
    <property type="entry name" value="CD36FAMILY"/>
</dbReference>
<gene>
    <name evidence="3" type="primary">Snmp1</name>
    <name type="ORF">GH19409</name>
</gene>
<feature type="chain" id="PRO_0000408238" description="Sensory neuron membrane protein 1">
    <location>
        <begin position="1"/>
        <end position="547"/>
    </location>
</feature>
<feature type="topological domain" description="Cytoplasmic" evidence="4">
    <location>
        <begin position="1"/>
        <end position="7"/>
    </location>
</feature>
<feature type="transmembrane region" description="Helical" evidence="4">
    <location>
        <begin position="8"/>
        <end position="28"/>
    </location>
</feature>
<feature type="topological domain" description="Extracellular" evidence="4">
    <location>
        <begin position="29"/>
        <end position="460"/>
    </location>
</feature>
<feature type="transmembrane region" description="Helical" evidence="4">
    <location>
        <begin position="461"/>
        <end position="481"/>
    </location>
</feature>
<feature type="topological domain" description="Cytoplasmic" evidence="4">
    <location>
        <begin position="482"/>
        <end position="547"/>
    </location>
</feature>
<feature type="region of interest" description="Disordered" evidence="5">
    <location>
        <begin position="506"/>
        <end position="531"/>
    </location>
</feature>
<feature type="compositionally biased region" description="Low complexity" evidence="5">
    <location>
        <begin position="511"/>
        <end position="522"/>
    </location>
</feature>
<feature type="glycosylation site" description="N-linked (GlcNAc...) asparagine" evidence="4">
    <location>
        <position position="66"/>
    </location>
</feature>
<feature type="glycosylation site" description="N-linked (GlcNAc...) asparagine" evidence="4">
    <location>
        <position position="213"/>
    </location>
</feature>
<feature type="glycosylation site" description="N-linked (GlcNAc...) asparagine" evidence="4">
    <location>
        <position position="226"/>
    </location>
</feature>
<feature type="glycosylation site" description="N-linked (GlcNAc...) asparagine" evidence="4">
    <location>
        <position position="440"/>
    </location>
</feature>
<feature type="disulfide bond" evidence="2">
    <location>
        <begin position="265"/>
        <end position="330"/>
    </location>
</feature>
<feature type="disulfide bond" evidence="2">
    <location>
        <begin position="294"/>
        <end position="352"/>
    </location>
</feature>
<feature type="disulfide bond" evidence="2">
    <location>
        <begin position="332"/>
        <end position="341"/>
    </location>
</feature>
<proteinExistence type="inferred from homology"/>
<organism>
    <name type="scientific">Drosophila grimshawi</name>
    <name type="common">Hawaiian fruit fly</name>
    <name type="synonym">Idiomyia grimshawi</name>
    <dbReference type="NCBI Taxonomy" id="7222"/>
    <lineage>
        <taxon>Eukaryota</taxon>
        <taxon>Metazoa</taxon>
        <taxon>Ecdysozoa</taxon>
        <taxon>Arthropoda</taxon>
        <taxon>Hexapoda</taxon>
        <taxon>Insecta</taxon>
        <taxon>Pterygota</taxon>
        <taxon>Neoptera</taxon>
        <taxon>Endopterygota</taxon>
        <taxon>Diptera</taxon>
        <taxon>Brachycera</taxon>
        <taxon>Muscomorpha</taxon>
        <taxon>Ephydroidea</taxon>
        <taxon>Drosophilidae</taxon>
        <taxon>Drosophila</taxon>
        <taxon>Hawaiian Drosophila</taxon>
    </lineage>
</organism>
<reference evidence="7" key="1">
    <citation type="journal article" date="2007" name="Nature">
        <title>Evolution of genes and genomes on the Drosophila phylogeny.</title>
        <authorList>
            <consortium name="Drosophila 12 genomes consortium"/>
        </authorList>
    </citation>
    <scope>NUCLEOTIDE SEQUENCE [LARGE SCALE GENOMIC DNA]</scope>
    <source>
        <strain evidence="7">Tucson 15287-2541.00</strain>
    </source>
</reference>
<comment type="function">
    <text evidence="3">Plays an olfactory role that is not restricted to pheromone sensitivity.</text>
</comment>
<comment type="subcellular location">
    <subcellularLocation>
        <location evidence="1">Cell membrane</location>
        <topology evidence="1">Multi-pass membrane protein</topology>
    </subcellularLocation>
</comment>
<comment type="similarity">
    <text evidence="6">Belongs to the CD36 family.</text>
</comment>
<accession>B4JG39</accession>
<sequence length="547" mass="61861">MQVHRTKLLAASGGTLLFGILFGWVLFPQILKFMISKQVTLKPGTDVRELWSATPFPLHFYIYVFNVTNPDEVANGGKPRVQEVGPFVFDEWKDKYDLEDDVVEDTVSYNMRNTFFFNEKASSPLTGEEVITLPHPLLQSIGISVQRERAAMMELIAKALAIILPDAKPFLTAKFMDLFFRGINVDCSSEEFASKALCTVFYTGDVKQAKQVNQTHFLLSFLGQSNHTDAGRFTVCRGVKNNKKLGMVVKFADEPELDMWLGDECNRFVGTDSTVFAPGLKREDGLWAFTPDLCRSLGAVYKHKSSYHGMPSLRYTLDMGDIRMDEKLHCFCDDPEDLETCPLKGTMNLNRCVGGPLIASMPHFYNGDPKLVQDVDGLNPNQKQHEVFIDFEPISGTPFQAAKRMQFNMDMEPVEGIEPLRHQRKVIMPMFWVEEGVQLNKTYTNMVKHTLFLGLKFNAGLRWMLITFSLIGLMSAGYLFFKESDSLDVTMPPKIIKESNKVANQPTFAKQQQHQDQQSQSQATAAPNVPIPGVDLSNVKVELRERF</sequence>
<keyword id="KW-1003">Cell membrane</keyword>
<keyword id="KW-1015">Disulfide bond</keyword>
<keyword id="KW-0325">Glycoprotein</keyword>
<keyword id="KW-0472">Membrane</keyword>
<keyword id="KW-0552">Olfaction</keyword>
<keyword id="KW-0675">Receptor</keyword>
<keyword id="KW-1185">Reference proteome</keyword>
<keyword id="KW-0716">Sensory transduction</keyword>
<keyword id="KW-0812">Transmembrane</keyword>
<keyword id="KW-1133">Transmembrane helix</keyword>
<protein>
    <recommendedName>
        <fullName evidence="3">Sensory neuron membrane protein 1</fullName>
    </recommendedName>
</protein>
<name>SNMP1_DROGR</name>